<accession>Q8RMC0</accession>
<feature type="signal peptide" evidence="1">
    <location>
        <begin position="1"/>
        <end position="19"/>
    </location>
</feature>
<feature type="chain" id="PRO_0000021772" description="Major surface protein MspTL">
    <location>
        <begin position="20"/>
        <end position="590"/>
    </location>
</feature>
<comment type="function">
    <text>Major component of the outer membrane.</text>
</comment>
<comment type="subcellular location">
    <subcellularLocation>
        <location>Cell outer membrane</location>
        <topology>Peripheral membrane protein</topology>
    </subcellularLocation>
</comment>
<keyword id="KW-0998">Cell outer membrane</keyword>
<keyword id="KW-0472">Membrane</keyword>
<keyword id="KW-0732">Signal</keyword>
<reference key="1">
    <citation type="journal article" date="2002" name="FEMS Microbiol. Lett.">
        <title>Cloning and characterization of a major surface protein (MspTL) of Treponema lecithinolyticum associated with rapidly progressive periodontitis.</title>
        <authorList>
            <person name="Park K.-K."/>
            <person name="Heuner K."/>
            <person name="Goebel U.B."/>
            <person name="Yoo Y.-J."/>
            <person name="Kim C.-K."/>
            <person name="Choi B.-K."/>
        </authorList>
    </citation>
    <scope>NUCLEOTIDE SEQUENCE [GENOMIC DNA]</scope>
    <source>
        <strain>ATCC 700332 / CIP 107075 / OMZ 684 / PFB4G</strain>
    </source>
</reference>
<sequence>MKKILAFFLVFALAGAVFADEPSAEAKIAEFKGDAAVTFGVDLDTNRTGFKNEVGGSIKLNLLNGGDKSTTGDGIWGELKLKINAFTLQAKADKNVNLLTKIDDDDVKVEIDTAKIHIGPAYVGIKKGDLNYGSNFWYPNALNYKDGDDEYYNRTPSDKVKYDQGLVLGYEQKDLFKVETAFRSQKDTGKKLDKVEGVILPKDTEIKKGEYFKSVEGAHDNAKTDDVFDDAALVDPIPGKTDVKKLKATXAVFKRVMKDGDTNYWTDKYALGVYGEVKPIKDLRVAIGTAYVFGRLSGDKDVLKAVGDSDNRGDITFFTGAXYKLSLLEKFVVNPVVTYTLYADAKWNGANEKLXYPEXLKTSMLKTGVRFGWGEXKKSNSLLYDFXGKNTLVYDTNKEDKGDDKLLPGVSLFGAFDLVNKNIETKLPLMXTFYSGELVKGLNVAALVHANVAKDASEISRVVPGTVYAGRMTKAXYERLIGAKGLQIGLAASYDVKLNDITIVPAAAMLWTHGMLKGEADTRMTADEFKVEAKVDVKGVIQNTTLSVFWDEAAFGKGTSKEWTFGVKHDEQNYYTLKNGVFGLKAKIAL</sequence>
<evidence type="ECO:0000255" key="1"/>
<protein>
    <recommendedName>
        <fullName>Major surface protein MspTL</fullName>
    </recommendedName>
</protein>
<gene>
    <name type="primary">mspTL</name>
</gene>
<proteinExistence type="inferred from homology"/>
<name>MSP_TRELE</name>
<organism>
    <name type="scientific">Treponema lecithinolyticum</name>
    <dbReference type="NCBI Taxonomy" id="53418"/>
    <lineage>
        <taxon>Bacteria</taxon>
        <taxon>Pseudomonadati</taxon>
        <taxon>Spirochaetota</taxon>
        <taxon>Spirochaetia</taxon>
        <taxon>Spirochaetales</taxon>
        <taxon>Treponemataceae</taxon>
        <taxon>Treponema</taxon>
    </lineage>
</organism>
<dbReference type="EMBL" id="AY026951">
    <property type="protein sequence ID" value="AAK11483.1"/>
    <property type="molecule type" value="Genomic_DNA"/>
</dbReference>
<dbReference type="TCDB" id="1.B.38.3.3">
    <property type="family name" value="the treponema porin major surface protein (tp-msp) family"/>
</dbReference>
<dbReference type="GO" id="GO:0009279">
    <property type="term" value="C:cell outer membrane"/>
    <property type="evidence" value="ECO:0007669"/>
    <property type="project" value="UniProtKB-SubCell"/>
</dbReference>